<evidence type="ECO:0000255" key="1">
    <source>
        <dbReference type="HAMAP-Rule" id="MF_00083"/>
    </source>
</evidence>
<comment type="function">
    <text evidence="1">Hydrolyzes ribosome-free peptidyl-tRNAs (with 1 or more amino acids incorporated), which drop off the ribosome during protein synthesis, or as a result of ribosome stalling.</text>
</comment>
<comment type="function">
    <text evidence="1">Catalyzes the release of premature peptidyl moieties from peptidyl-tRNA molecules trapped in stalled 50S ribosomal subunits, and thus maintains levels of free tRNAs and 50S ribosomes.</text>
</comment>
<comment type="catalytic activity">
    <reaction evidence="1">
        <text>an N-acyl-L-alpha-aminoacyl-tRNA + H2O = an N-acyl-L-amino acid + a tRNA + H(+)</text>
        <dbReference type="Rhea" id="RHEA:54448"/>
        <dbReference type="Rhea" id="RHEA-COMP:10123"/>
        <dbReference type="Rhea" id="RHEA-COMP:13883"/>
        <dbReference type="ChEBI" id="CHEBI:15377"/>
        <dbReference type="ChEBI" id="CHEBI:15378"/>
        <dbReference type="ChEBI" id="CHEBI:59874"/>
        <dbReference type="ChEBI" id="CHEBI:78442"/>
        <dbReference type="ChEBI" id="CHEBI:138191"/>
        <dbReference type="EC" id="3.1.1.29"/>
    </reaction>
</comment>
<comment type="subunit">
    <text evidence="1">Monomer.</text>
</comment>
<comment type="subcellular location">
    <subcellularLocation>
        <location evidence="1">Cytoplasm</location>
    </subcellularLocation>
</comment>
<comment type="similarity">
    <text evidence="1">Belongs to the PTH family.</text>
</comment>
<proteinExistence type="inferred from homology"/>
<protein>
    <recommendedName>
        <fullName evidence="1">Peptidyl-tRNA hydrolase</fullName>
        <shortName evidence="1">Pth</shortName>
        <ecNumber evidence="1">3.1.1.29</ecNumber>
    </recommendedName>
</protein>
<dbReference type="EC" id="3.1.1.29" evidence="1"/>
<dbReference type="EMBL" id="CP000993">
    <property type="protein sequence ID" value="ACH95008.1"/>
    <property type="molecule type" value="Genomic_DNA"/>
</dbReference>
<dbReference type="RefSeq" id="WP_012539164.1">
    <property type="nucleotide sequence ID" value="NC_011244.1"/>
</dbReference>
<dbReference type="SMR" id="B5RQC4"/>
<dbReference type="KEGG" id="bre:BRE_796"/>
<dbReference type="HOGENOM" id="CLU_062456_4_1_12"/>
<dbReference type="Proteomes" id="UP000000612">
    <property type="component" value="Chromosome"/>
</dbReference>
<dbReference type="GO" id="GO:0005737">
    <property type="term" value="C:cytoplasm"/>
    <property type="evidence" value="ECO:0007669"/>
    <property type="project" value="UniProtKB-SubCell"/>
</dbReference>
<dbReference type="GO" id="GO:0004045">
    <property type="term" value="F:peptidyl-tRNA hydrolase activity"/>
    <property type="evidence" value="ECO:0007669"/>
    <property type="project" value="UniProtKB-UniRule"/>
</dbReference>
<dbReference type="GO" id="GO:0000049">
    <property type="term" value="F:tRNA binding"/>
    <property type="evidence" value="ECO:0007669"/>
    <property type="project" value="UniProtKB-UniRule"/>
</dbReference>
<dbReference type="GO" id="GO:0006515">
    <property type="term" value="P:protein quality control for misfolded or incompletely synthesized proteins"/>
    <property type="evidence" value="ECO:0007669"/>
    <property type="project" value="UniProtKB-UniRule"/>
</dbReference>
<dbReference type="GO" id="GO:0072344">
    <property type="term" value="P:rescue of stalled ribosome"/>
    <property type="evidence" value="ECO:0007669"/>
    <property type="project" value="UniProtKB-UniRule"/>
</dbReference>
<dbReference type="CDD" id="cd00462">
    <property type="entry name" value="PTH"/>
    <property type="match status" value="1"/>
</dbReference>
<dbReference type="Gene3D" id="3.40.50.1470">
    <property type="entry name" value="Peptidyl-tRNA hydrolase"/>
    <property type="match status" value="1"/>
</dbReference>
<dbReference type="HAMAP" id="MF_00083">
    <property type="entry name" value="Pept_tRNA_hydro_bact"/>
    <property type="match status" value="1"/>
</dbReference>
<dbReference type="InterPro" id="IPR001328">
    <property type="entry name" value="Pept_tRNA_hydro"/>
</dbReference>
<dbReference type="InterPro" id="IPR018171">
    <property type="entry name" value="Pept_tRNA_hydro_CS"/>
</dbReference>
<dbReference type="InterPro" id="IPR036416">
    <property type="entry name" value="Pept_tRNA_hydro_sf"/>
</dbReference>
<dbReference type="NCBIfam" id="TIGR00447">
    <property type="entry name" value="pth"/>
    <property type="match status" value="1"/>
</dbReference>
<dbReference type="PANTHER" id="PTHR17224">
    <property type="entry name" value="PEPTIDYL-TRNA HYDROLASE"/>
    <property type="match status" value="1"/>
</dbReference>
<dbReference type="PANTHER" id="PTHR17224:SF1">
    <property type="entry name" value="PEPTIDYL-TRNA HYDROLASE"/>
    <property type="match status" value="1"/>
</dbReference>
<dbReference type="Pfam" id="PF01195">
    <property type="entry name" value="Pept_tRNA_hydro"/>
    <property type="match status" value="1"/>
</dbReference>
<dbReference type="SUPFAM" id="SSF53178">
    <property type="entry name" value="Peptidyl-tRNA hydrolase-like"/>
    <property type="match status" value="1"/>
</dbReference>
<dbReference type="PROSITE" id="PS01195">
    <property type="entry name" value="PEPT_TRNA_HYDROL_1"/>
    <property type="match status" value="1"/>
</dbReference>
<dbReference type="PROSITE" id="PS01196">
    <property type="entry name" value="PEPT_TRNA_HYDROL_2"/>
    <property type="match status" value="1"/>
</dbReference>
<organism>
    <name type="scientific">Borrelia recurrentis (strain A1)</name>
    <dbReference type="NCBI Taxonomy" id="412418"/>
    <lineage>
        <taxon>Bacteria</taxon>
        <taxon>Pseudomonadati</taxon>
        <taxon>Spirochaetota</taxon>
        <taxon>Spirochaetia</taxon>
        <taxon>Spirochaetales</taxon>
        <taxon>Borreliaceae</taxon>
        <taxon>Borrelia</taxon>
    </lineage>
</organism>
<keyword id="KW-0963">Cytoplasm</keyword>
<keyword id="KW-0378">Hydrolase</keyword>
<keyword id="KW-0694">RNA-binding</keyword>
<keyword id="KW-0820">tRNA-binding</keyword>
<gene>
    <name evidence="1" type="primary">pth</name>
    <name type="ordered locus">BRE_796</name>
</gene>
<sequence>MNLLIVGLGNPGSNFLHTRHNVGFGLIDKLVMKNALSLRKAKNYEYADFNVDSRRIVLIKPLTYMNLSGNIFPCVFSKFYMKINNLLVVVDNVDLPLGKCRLRKVGGASTHNGLRSISESLGSTKYGRLYIGVGNNSAFGLKDFVLSKFNDSELVRVKNVFNFLSEEILGIDEFSFEHKIATINSSSF</sequence>
<reference key="1">
    <citation type="journal article" date="2008" name="PLoS Genet.">
        <title>The genome of Borrelia recurrentis, the agent of deadly louse-borne relapsing fever, is a degraded subset of tick-borne Borrelia duttonii.</title>
        <authorList>
            <person name="Lescot M."/>
            <person name="Audic S."/>
            <person name="Robert C."/>
            <person name="Nguyen T.T."/>
            <person name="Blanc G."/>
            <person name="Cutler S.J."/>
            <person name="Wincker P."/>
            <person name="Couloux A."/>
            <person name="Claverie J.-M."/>
            <person name="Raoult D."/>
            <person name="Drancourt M."/>
        </authorList>
    </citation>
    <scope>NUCLEOTIDE SEQUENCE [LARGE SCALE GENOMIC DNA]</scope>
    <source>
        <strain>A1</strain>
    </source>
</reference>
<name>PTH_BORRA</name>
<feature type="chain" id="PRO_1000092914" description="Peptidyl-tRNA hydrolase">
    <location>
        <begin position="1"/>
        <end position="188"/>
    </location>
</feature>
<feature type="active site" description="Proton acceptor" evidence="1">
    <location>
        <position position="20"/>
    </location>
</feature>
<feature type="binding site" evidence="1">
    <location>
        <position position="15"/>
    </location>
    <ligand>
        <name>tRNA</name>
        <dbReference type="ChEBI" id="CHEBI:17843"/>
    </ligand>
</feature>
<feature type="binding site" evidence="1">
    <location>
        <position position="64"/>
    </location>
    <ligand>
        <name>tRNA</name>
        <dbReference type="ChEBI" id="CHEBI:17843"/>
    </ligand>
</feature>
<feature type="binding site" evidence="1">
    <location>
        <position position="66"/>
    </location>
    <ligand>
        <name>tRNA</name>
        <dbReference type="ChEBI" id="CHEBI:17843"/>
    </ligand>
</feature>
<feature type="binding site" evidence="1">
    <location>
        <position position="112"/>
    </location>
    <ligand>
        <name>tRNA</name>
        <dbReference type="ChEBI" id="CHEBI:17843"/>
    </ligand>
</feature>
<feature type="site" description="Discriminates between blocked and unblocked aminoacyl-tRNA" evidence="1">
    <location>
        <position position="10"/>
    </location>
</feature>
<feature type="site" description="Stabilizes the basic form of H active site to accept a proton" evidence="1">
    <location>
        <position position="91"/>
    </location>
</feature>
<accession>B5RQC4</accession>